<feature type="chain" id="PRO_0000326775" description="Acylphosphatase">
    <location>
        <begin position="1"/>
        <end position="90"/>
    </location>
</feature>
<feature type="domain" description="Acylphosphatase-like" evidence="1">
    <location>
        <begin position="3"/>
        <end position="88"/>
    </location>
</feature>
<feature type="active site" evidence="1">
    <location>
        <position position="18"/>
    </location>
</feature>
<feature type="active site" evidence="1">
    <location>
        <position position="36"/>
    </location>
</feature>
<organism>
    <name type="scientific">Cupriavidus pinatubonensis (strain JMP 134 / LMG 1197)</name>
    <name type="common">Cupriavidus necator (strain JMP 134)</name>
    <dbReference type="NCBI Taxonomy" id="264198"/>
    <lineage>
        <taxon>Bacteria</taxon>
        <taxon>Pseudomonadati</taxon>
        <taxon>Pseudomonadota</taxon>
        <taxon>Betaproteobacteria</taxon>
        <taxon>Burkholderiales</taxon>
        <taxon>Burkholderiaceae</taxon>
        <taxon>Cupriavidus</taxon>
    </lineage>
</organism>
<name>ACYP_CUPPJ</name>
<accession>Q46WU4</accession>
<proteinExistence type="inferred from homology"/>
<dbReference type="EC" id="3.6.1.7"/>
<dbReference type="EMBL" id="CP000090">
    <property type="protein sequence ID" value="AAZ62389.1"/>
    <property type="molecule type" value="Genomic_DNA"/>
</dbReference>
<dbReference type="SMR" id="Q46WU4"/>
<dbReference type="STRING" id="264198.Reut_A3029"/>
<dbReference type="KEGG" id="reu:Reut_A3029"/>
<dbReference type="eggNOG" id="COG1254">
    <property type="taxonomic scope" value="Bacteria"/>
</dbReference>
<dbReference type="HOGENOM" id="CLU_141932_1_0_4"/>
<dbReference type="OrthoDB" id="5295388at2"/>
<dbReference type="GO" id="GO:0003998">
    <property type="term" value="F:acylphosphatase activity"/>
    <property type="evidence" value="ECO:0007669"/>
    <property type="project" value="UniProtKB-EC"/>
</dbReference>
<dbReference type="Gene3D" id="3.30.70.100">
    <property type="match status" value="1"/>
</dbReference>
<dbReference type="InterPro" id="IPR020456">
    <property type="entry name" value="Acylphosphatase"/>
</dbReference>
<dbReference type="InterPro" id="IPR001792">
    <property type="entry name" value="Acylphosphatase-like_dom"/>
</dbReference>
<dbReference type="InterPro" id="IPR036046">
    <property type="entry name" value="Acylphosphatase-like_dom_sf"/>
</dbReference>
<dbReference type="InterPro" id="IPR017968">
    <property type="entry name" value="Acylphosphatase_CS"/>
</dbReference>
<dbReference type="NCBIfam" id="NF011004">
    <property type="entry name" value="PRK14430.1"/>
    <property type="match status" value="1"/>
</dbReference>
<dbReference type="PANTHER" id="PTHR47268">
    <property type="entry name" value="ACYLPHOSPHATASE"/>
    <property type="match status" value="1"/>
</dbReference>
<dbReference type="PANTHER" id="PTHR47268:SF4">
    <property type="entry name" value="ACYLPHOSPHATASE"/>
    <property type="match status" value="1"/>
</dbReference>
<dbReference type="Pfam" id="PF00708">
    <property type="entry name" value="Acylphosphatase"/>
    <property type="match status" value="1"/>
</dbReference>
<dbReference type="SUPFAM" id="SSF54975">
    <property type="entry name" value="Acylphosphatase/BLUF domain-like"/>
    <property type="match status" value="1"/>
</dbReference>
<dbReference type="PROSITE" id="PS00151">
    <property type="entry name" value="ACYLPHOSPHATASE_2"/>
    <property type="match status" value="1"/>
</dbReference>
<dbReference type="PROSITE" id="PS51160">
    <property type="entry name" value="ACYLPHOSPHATASE_3"/>
    <property type="match status" value="1"/>
</dbReference>
<protein>
    <recommendedName>
        <fullName>Acylphosphatase</fullName>
        <ecNumber>3.6.1.7</ecNumber>
    </recommendedName>
    <alternativeName>
        <fullName>Acylphosphate phosphohydrolase</fullName>
    </alternativeName>
</protein>
<gene>
    <name type="primary">acyP</name>
    <name type="ordered locus">Reut_A3029</name>
</gene>
<sequence length="90" mass="9771">METWHMTAHGRVQGVGYRAGCAQAAIALGVRGWVRNRADGTVEVMASGTIQQLEALRNWMQAGPPAAHVARVDVEPGQGKFEDFDLRPTL</sequence>
<reference key="1">
    <citation type="journal article" date="2010" name="PLoS ONE">
        <title>The complete multipartite genome sequence of Cupriavidus necator JMP134, a versatile pollutant degrader.</title>
        <authorList>
            <person name="Lykidis A."/>
            <person name="Perez-Pantoja D."/>
            <person name="Ledger T."/>
            <person name="Mavromatis K."/>
            <person name="Anderson I.J."/>
            <person name="Ivanova N.N."/>
            <person name="Hooper S.D."/>
            <person name="Lapidus A."/>
            <person name="Lucas S."/>
            <person name="Gonzalez B."/>
            <person name="Kyrpides N.C."/>
        </authorList>
    </citation>
    <scope>NUCLEOTIDE SEQUENCE [LARGE SCALE GENOMIC DNA]</scope>
    <source>
        <strain>JMP134 / LMG 1197</strain>
    </source>
</reference>
<keyword id="KW-0378">Hydrolase</keyword>
<comment type="catalytic activity">
    <reaction>
        <text>an acyl phosphate + H2O = a carboxylate + phosphate + H(+)</text>
        <dbReference type="Rhea" id="RHEA:14965"/>
        <dbReference type="ChEBI" id="CHEBI:15377"/>
        <dbReference type="ChEBI" id="CHEBI:15378"/>
        <dbReference type="ChEBI" id="CHEBI:29067"/>
        <dbReference type="ChEBI" id="CHEBI:43474"/>
        <dbReference type="ChEBI" id="CHEBI:59918"/>
        <dbReference type="EC" id="3.6.1.7"/>
    </reaction>
</comment>
<comment type="similarity">
    <text evidence="2">Belongs to the acylphosphatase family.</text>
</comment>
<evidence type="ECO:0000255" key="1">
    <source>
        <dbReference type="PROSITE-ProRule" id="PRU00520"/>
    </source>
</evidence>
<evidence type="ECO:0000305" key="2"/>